<name>SNU13_CANAL</name>
<sequence length="126" mass="13601">MSAPNPKAFPLADSALTQQILDVVQQSQNLRQLKKGANEATKTLNRGISEFIIMAADTEPIEILLHLPLLCEDKNVPYVFVPSKAALGRACGVSRPVIAASVTSNDASSIKNQIYGIKDKIETLLI</sequence>
<keyword id="KW-0507">mRNA processing</keyword>
<keyword id="KW-0508">mRNA splicing</keyword>
<keyword id="KW-0539">Nucleus</keyword>
<keyword id="KW-1185">Reference proteome</keyword>
<keyword id="KW-0687">Ribonucleoprotein</keyword>
<keyword id="KW-0690">Ribosome biogenesis</keyword>
<keyword id="KW-0694">RNA-binding</keyword>
<keyword id="KW-0698">rRNA processing</keyword>
<keyword id="KW-0747">Spliceosome</keyword>
<evidence type="ECO:0000250" key="1"/>
<evidence type="ECO:0000305" key="2"/>
<gene>
    <name type="primary">SNU13</name>
    <name type="ordered locus">CAALFM_C304380CA</name>
    <name type="ORF">CaO19.13306</name>
    <name type="ORF">CaO19.5885</name>
</gene>
<organism>
    <name type="scientific">Candida albicans (strain SC5314 / ATCC MYA-2876)</name>
    <name type="common">Yeast</name>
    <dbReference type="NCBI Taxonomy" id="237561"/>
    <lineage>
        <taxon>Eukaryota</taxon>
        <taxon>Fungi</taxon>
        <taxon>Dikarya</taxon>
        <taxon>Ascomycota</taxon>
        <taxon>Saccharomycotina</taxon>
        <taxon>Pichiomycetes</taxon>
        <taxon>Debaryomycetaceae</taxon>
        <taxon>Candida/Lodderomyces clade</taxon>
        <taxon>Candida</taxon>
    </lineage>
</organism>
<accession>Q5ANL6</accession>
<accession>A0A1D8PJW3</accession>
<proteinExistence type="inferred from homology"/>
<reference key="1">
    <citation type="journal article" date="2004" name="Proc. Natl. Acad. Sci. U.S.A.">
        <title>The diploid genome sequence of Candida albicans.</title>
        <authorList>
            <person name="Jones T."/>
            <person name="Federspiel N.A."/>
            <person name="Chibana H."/>
            <person name="Dungan J."/>
            <person name="Kalman S."/>
            <person name="Magee B.B."/>
            <person name="Newport G."/>
            <person name="Thorstenson Y.R."/>
            <person name="Agabian N."/>
            <person name="Magee P.T."/>
            <person name="Davis R.W."/>
            <person name="Scherer S."/>
        </authorList>
    </citation>
    <scope>NUCLEOTIDE SEQUENCE [LARGE SCALE GENOMIC DNA]</scope>
    <source>
        <strain>SC5314 / ATCC MYA-2876</strain>
    </source>
</reference>
<reference key="2">
    <citation type="journal article" date="2007" name="Genome Biol.">
        <title>Assembly of the Candida albicans genome into sixteen supercontigs aligned on the eight chromosomes.</title>
        <authorList>
            <person name="van het Hoog M."/>
            <person name="Rast T.J."/>
            <person name="Martchenko M."/>
            <person name="Grindle S."/>
            <person name="Dignard D."/>
            <person name="Hogues H."/>
            <person name="Cuomo C."/>
            <person name="Berriman M."/>
            <person name="Scherer S."/>
            <person name="Magee B.B."/>
            <person name="Whiteway M."/>
            <person name="Chibana H."/>
            <person name="Nantel A."/>
            <person name="Magee P.T."/>
        </authorList>
    </citation>
    <scope>GENOME REANNOTATION</scope>
    <source>
        <strain>SC5314 / ATCC MYA-2876</strain>
    </source>
</reference>
<reference key="3">
    <citation type="journal article" date="2013" name="Genome Biol.">
        <title>Assembly of a phased diploid Candida albicans genome facilitates allele-specific measurements and provides a simple model for repeat and indel structure.</title>
        <authorList>
            <person name="Muzzey D."/>
            <person name="Schwartz K."/>
            <person name="Weissman J.S."/>
            <person name="Sherlock G."/>
        </authorList>
    </citation>
    <scope>NUCLEOTIDE SEQUENCE [LARGE SCALE GENOMIC DNA]</scope>
    <scope>GENOME REANNOTATION</scope>
    <source>
        <strain>SC5314 / ATCC MYA-2876</strain>
    </source>
</reference>
<comment type="function">
    <text evidence="1">Common component of the spliceosome and rRNA processing machinery. In association with the spliceosomal U4/U6.U5 tri-snRNP particle, required for splicing of pre-mRNA. In association with box C/D snoRNPs, required for processing of pre-ribosomal RNA (rRNA) and site-specific 2'-O-methylation of substrate RNAs. Essential for the accumulation and stability of U4 snRNA, U6 snRNA, and box C/D snoRNAs (By similarity).</text>
</comment>
<comment type="subunit">
    <text evidence="1">Component of the U3 snoRNP particle. Binds to the C'/D and B/C motifs in U3 snoRNA. Component of the 25S U4/U6.U5 tri-snRNP particle, a subcomplex of the spliceosome. Binds to the 5' stem-loop of U4 snRNA (By similarity).</text>
</comment>
<comment type="subcellular location">
    <subcellularLocation>
        <location evidence="1">Nucleus</location>
        <location evidence="1">Nucleolus</location>
    </subcellularLocation>
</comment>
<comment type="similarity">
    <text evidence="2">Belongs to the eukaryotic ribosomal protein eL8 family.</text>
</comment>
<feature type="chain" id="PRO_0000290657" description="13 kDa ribonucleoprotein-associated protein">
    <location>
        <begin position="1"/>
        <end position="126"/>
    </location>
</feature>
<dbReference type="EMBL" id="CP017625">
    <property type="protein sequence ID" value="AOW28456.1"/>
    <property type="molecule type" value="Genomic_DNA"/>
</dbReference>
<dbReference type="RefSeq" id="XP_723101.1">
    <property type="nucleotide sequence ID" value="XM_718008.1"/>
</dbReference>
<dbReference type="SMR" id="Q5ANL6"/>
<dbReference type="FunCoup" id="Q5ANL6">
    <property type="interactions" value="1352"/>
</dbReference>
<dbReference type="STRING" id="237561.Q5ANL6"/>
<dbReference type="EnsemblFungi" id="C3_04380C_A-T">
    <property type="protein sequence ID" value="C3_04380C_A-T-p1"/>
    <property type="gene ID" value="C3_04380C_A"/>
</dbReference>
<dbReference type="GeneID" id="3635173"/>
<dbReference type="KEGG" id="cal:CAALFM_C304380CA"/>
<dbReference type="CGD" id="CAL0000183109">
    <property type="gene designation" value="SNU13"/>
</dbReference>
<dbReference type="VEuPathDB" id="FungiDB:C3_04380C_A"/>
<dbReference type="eggNOG" id="KOG3387">
    <property type="taxonomic scope" value="Eukaryota"/>
</dbReference>
<dbReference type="HOGENOM" id="CLU_084513_4_1_1"/>
<dbReference type="InParanoid" id="Q5ANL6"/>
<dbReference type="OMA" id="IKNQIYA"/>
<dbReference type="OrthoDB" id="1924699at2759"/>
<dbReference type="PRO" id="PR:Q5ANL6"/>
<dbReference type="Proteomes" id="UP000000559">
    <property type="component" value="Chromosome 3"/>
</dbReference>
<dbReference type="GO" id="GO:0031428">
    <property type="term" value="C:box C/D methylation guide snoRNP complex"/>
    <property type="evidence" value="ECO:0000318"/>
    <property type="project" value="GO_Central"/>
</dbReference>
<dbReference type="GO" id="GO:0062040">
    <property type="term" value="C:fungal biofilm matrix"/>
    <property type="evidence" value="ECO:0000314"/>
    <property type="project" value="CGD"/>
</dbReference>
<dbReference type="GO" id="GO:0005730">
    <property type="term" value="C:nucleolus"/>
    <property type="evidence" value="ECO:0000318"/>
    <property type="project" value="GO_Central"/>
</dbReference>
<dbReference type="GO" id="GO:0071011">
    <property type="term" value="C:precatalytic spliceosome"/>
    <property type="evidence" value="ECO:0000318"/>
    <property type="project" value="GO_Central"/>
</dbReference>
<dbReference type="GO" id="GO:0032040">
    <property type="term" value="C:small-subunit processome"/>
    <property type="evidence" value="ECO:0000318"/>
    <property type="project" value="GO_Central"/>
</dbReference>
<dbReference type="GO" id="GO:0046540">
    <property type="term" value="C:U4/U6 x U5 tri-snRNP complex"/>
    <property type="evidence" value="ECO:0000318"/>
    <property type="project" value="GO_Central"/>
</dbReference>
<dbReference type="GO" id="GO:0003723">
    <property type="term" value="F:RNA binding"/>
    <property type="evidence" value="ECO:0000318"/>
    <property type="project" value="GO_Central"/>
</dbReference>
<dbReference type="GO" id="GO:0034511">
    <property type="term" value="F:U3 snoRNA binding"/>
    <property type="evidence" value="ECO:0007669"/>
    <property type="project" value="EnsemblFungi"/>
</dbReference>
<dbReference type="GO" id="GO:0030621">
    <property type="term" value="F:U4 snRNA binding"/>
    <property type="evidence" value="ECO:0007669"/>
    <property type="project" value="EnsemblFungi"/>
</dbReference>
<dbReference type="GO" id="GO:0000494">
    <property type="term" value="P:box C/D sno(s)RNA 3'-end processing"/>
    <property type="evidence" value="ECO:0007669"/>
    <property type="project" value="EnsemblFungi"/>
</dbReference>
<dbReference type="GO" id="GO:0044180">
    <property type="term" value="P:filamentous growth of a unicellular organism"/>
    <property type="evidence" value="ECO:0000315"/>
    <property type="project" value="CGD"/>
</dbReference>
<dbReference type="GO" id="GO:0030490">
    <property type="term" value="P:maturation of SSU-rRNA"/>
    <property type="evidence" value="ECO:0000318"/>
    <property type="project" value="GO_Central"/>
</dbReference>
<dbReference type="GO" id="GO:0000462">
    <property type="term" value="P:maturation of SSU-rRNA from tricistronic rRNA transcript (SSU-rRNA, 5.8S rRNA, LSU-rRNA)"/>
    <property type="evidence" value="ECO:0007669"/>
    <property type="project" value="EnsemblFungi"/>
</dbReference>
<dbReference type="GO" id="GO:0000398">
    <property type="term" value="P:mRNA splicing, via spliceosome"/>
    <property type="evidence" value="ECO:0000318"/>
    <property type="project" value="GO_Central"/>
</dbReference>
<dbReference type="GO" id="GO:0000452">
    <property type="term" value="P:snoRNA guided rRNA 2'-O-methylation"/>
    <property type="evidence" value="ECO:0007669"/>
    <property type="project" value="EnsemblFungi"/>
</dbReference>
<dbReference type="CDD" id="cd21104">
    <property type="entry name" value="SNU13"/>
    <property type="match status" value="1"/>
</dbReference>
<dbReference type="FunFam" id="3.30.1330.30:FF:000002">
    <property type="entry name" value="NHP2-like protein 1 homolog"/>
    <property type="match status" value="1"/>
</dbReference>
<dbReference type="Gene3D" id="3.30.1330.30">
    <property type="match status" value="1"/>
</dbReference>
<dbReference type="InterPro" id="IPR050257">
    <property type="entry name" value="eL8/uL1-like"/>
</dbReference>
<dbReference type="InterPro" id="IPR002415">
    <property type="entry name" value="H/ACA_rnp_Nhp2-like"/>
</dbReference>
<dbReference type="InterPro" id="IPR029064">
    <property type="entry name" value="Ribosomal_eL30-like_sf"/>
</dbReference>
<dbReference type="InterPro" id="IPR004037">
    <property type="entry name" value="Ribosomal_eL8-like_CS"/>
</dbReference>
<dbReference type="InterPro" id="IPR004038">
    <property type="entry name" value="Ribosomal_eL8/eL30/eS12/Gad45"/>
</dbReference>
<dbReference type="InterPro" id="IPR018492">
    <property type="entry name" value="Ribosomal_eL8/Nhp2"/>
</dbReference>
<dbReference type="PANTHER" id="PTHR23105">
    <property type="entry name" value="RIBOSOMAL PROTEIN L7AE FAMILY MEMBER"/>
    <property type="match status" value="1"/>
</dbReference>
<dbReference type="Pfam" id="PF01248">
    <property type="entry name" value="Ribosomal_L7Ae"/>
    <property type="match status" value="1"/>
</dbReference>
<dbReference type="PRINTS" id="PR00881">
    <property type="entry name" value="L7ARS6FAMILY"/>
</dbReference>
<dbReference type="PRINTS" id="PR00883">
    <property type="entry name" value="NUCLEARHMG"/>
</dbReference>
<dbReference type="SUPFAM" id="SSF55315">
    <property type="entry name" value="L30e-like"/>
    <property type="match status" value="1"/>
</dbReference>
<dbReference type="PROSITE" id="PS01082">
    <property type="entry name" value="RIBOSOMAL_L7AE"/>
    <property type="match status" value="1"/>
</dbReference>
<protein>
    <recommendedName>
        <fullName>13 kDa ribonucleoprotein-associated protein</fullName>
    </recommendedName>
</protein>